<sequence length="652" mass="74253">MLAHGSNDYGVSLKGNKTGSSPSKASSLNWNEPHTLNEQNTYCYCGKDRNLRFPDLQCSVCLNMFHLSCLSPPCTSMMGFSTNYQFVCKHCTEDGFERFERGVSAWKAITATAMANLVVKRYVETNPDVPVDSFNAEKMRNFQANTYFFKKKEDLIPFIEEHWQLLCPDREKVQTWQATLGSCLVANRDTYRAKDETMRNQNSEYALNNPNLFDFRSGYIFPFQRVGATVPKKRLVETETPPPSSSKLKEDYKDSKREMKRSNTPWSNASIKKNEVPTVPIRYKPPPWRDSDFETVPKLPIFYPNSSSPNFFSLSEIPFNRRGFRYSPCEAAKDLPNVMYREIELPPFTSRINWHDISTPVFIDHSALCATVEKGFRMARSNVFMTSGEWYFEIKIEKGGGDDGAHVRIGVSRREAPLDAPVGYDAYSYGLRDLGGQKVHMSRPRNFMDSFGTGDIIGLHISLPKPSFAQHTTLPSCHDRIPIRYKGQLYFEQPDYVPSKMMDELMIPSKHNRYIDLPYIPGSFIKVYKNGSYMGTAFENLLDFNPPNSINSNHYSFDDGSLGYYPSISMYGGGIARFQFGPQFSHRPLVLGSNVRPVSERYNEQIAEDVLCDILDEIDYAEDPNTSSVTIDVPQEPNAGITIIPEIKDITE</sequence>
<reference key="1">
    <citation type="journal article" date="2002" name="Nature">
        <title>The genome sequence of Schizosaccharomyces pombe.</title>
        <authorList>
            <person name="Wood V."/>
            <person name="Gwilliam R."/>
            <person name="Rajandream M.A."/>
            <person name="Lyne M.H."/>
            <person name="Lyne R."/>
            <person name="Stewart A."/>
            <person name="Sgouros J.G."/>
            <person name="Peat N."/>
            <person name="Hayles J."/>
            <person name="Baker S.G."/>
            <person name="Basham D."/>
            <person name="Bowman S."/>
            <person name="Brooks K."/>
            <person name="Brown D."/>
            <person name="Brown S."/>
            <person name="Chillingworth T."/>
            <person name="Churcher C.M."/>
            <person name="Collins M."/>
            <person name="Connor R."/>
            <person name="Cronin A."/>
            <person name="Davis P."/>
            <person name="Feltwell T."/>
            <person name="Fraser A."/>
            <person name="Gentles S."/>
            <person name="Goble A."/>
            <person name="Hamlin N."/>
            <person name="Harris D.E."/>
            <person name="Hidalgo J."/>
            <person name="Hodgson G."/>
            <person name="Holroyd S."/>
            <person name="Hornsby T."/>
            <person name="Howarth S."/>
            <person name="Huckle E.J."/>
            <person name="Hunt S."/>
            <person name="Jagels K."/>
            <person name="James K.D."/>
            <person name="Jones L."/>
            <person name="Jones M."/>
            <person name="Leather S."/>
            <person name="McDonald S."/>
            <person name="McLean J."/>
            <person name="Mooney P."/>
            <person name="Moule S."/>
            <person name="Mungall K.L."/>
            <person name="Murphy L.D."/>
            <person name="Niblett D."/>
            <person name="Odell C."/>
            <person name="Oliver K."/>
            <person name="O'Neil S."/>
            <person name="Pearson D."/>
            <person name="Quail M.A."/>
            <person name="Rabbinowitsch E."/>
            <person name="Rutherford K.M."/>
            <person name="Rutter S."/>
            <person name="Saunders D."/>
            <person name="Seeger K."/>
            <person name="Sharp S."/>
            <person name="Skelton J."/>
            <person name="Simmonds M.N."/>
            <person name="Squares R."/>
            <person name="Squares S."/>
            <person name="Stevens K."/>
            <person name="Taylor K."/>
            <person name="Taylor R.G."/>
            <person name="Tivey A."/>
            <person name="Walsh S.V."/>
            <person name="Warren T."/>
            <person name="Whitehead S."/>
            <person name="Woodward J.R."/>
            <person name="Volckaert G."/>
            <person name="Aert R."/>
            <person name="Robben J."/>
            <person name="Grymonprez B."/>
            <person name="Weltjens I."/>
            <person name="Vanstreels E."/>
            <person name="Rieger M."/>
            <person name="Schaefer M."/>
            <person name="Mueller-Auer S."/>
            <person name="Gabel C."/>
            <person name="Fuchs M."/>
            <person name="Duesterhoeft A."/>
            <person name="Fritzc C."/>
            <person name="Holzer E."/>
            <person name="Moestl D."/>
            <person name="Hilbert H."/>
            <person name="Borzym K."/>
            <person name="Langer I."/>
            <person name="Beck A."/>
            <person name="Lehrach H."/>
            <person name="Reinhardt R."/>
            <person name="Pohl T.M."/>
            <person name="Eger P."/>
            <person name="Zimmermann W."/>
            <person name="Wedler H."/>
            <person name="Wambutt R."/>
            <person name="Purnelle B."/>
            <person name="Goffeau A."/>
            <person name="Cadieu E."/>
            <person name="Dreano S."/>
            <person name="Gloux S."/>
            <person name="Lelaure V."/>
            <person name="Mottier S."/>
            <person name="Galibert F."/>
            <person name="Aves S.J."/>
            <person name="Xiang Z."/>
            <person name="Hunt C."/>
            <person name="Moore K."/>
            <person name="Hurst S.M."/>
            <person name="Lucas M."/>
            <person name="Rochet M."/>
            <person name="Gaillardin C."/>
            <person name="Tallada V.A."/>
            <person name="Garzon A."/>
            <person name="Thode G."/>
            <person name="Daga R.R."/>
            <person name="Cruzado L."/>
            <person name="Jimenez J."/>
            <person name="Sanchez M."/>
            <person name="del Rey F."/>
            <person name="Benito J."/>
            <person name="Dominguez A."/>
            <person name="Revuelta J.L."/>
            <person name="Moreno S."/>
            <person name="Armstrong J."/>
            <person name="Forsburg S.L."/>
            <person name="Cerutti L."/>
            <person name="Lowe T."/>
            <person name="McCombie W.R."/>
            <person name="Paulsen I."/>
            <person name="Potashkin J."/>
            <person name="Shpakovski G.V."/>
            <person name="Ussery D."/>
            <person name="Barrell B.G."/>
            <person name="Nurse P."/>
        </authorList>
    </citation>
    <scope>NUCLEOTIDE SEQUENCE [LARGE SCALE GENOMIC DNA]</scope>
    <source>
        <strain>972 / ATCC 24843</strain>
    </source>
</reference>
<reference key="2">
    <citation type="journal article" date="2003" name="J. Biol. Chem.">
        <title>High conservation of the Set1/Rad6 axis of histone 3 lysine 4 methylation in budding and fission yeasts.</title>
        <authorList>
            <person name="Roguev A."/>
            <person name="Schaft D."/>
            <person name="Shevchenko A."/>
            <person name="Aasland R."/>
            <person name="Shevchenko A."/>
            <person name="Stewart A.F."/>
        </authorList>
    </citation>
    <scope>FUNCTION OF THE SET1 COMPLEX</scope>
    <scope>COMPOSITION OF THE SET1 AND LID2 COMPLEXES</scope>
</reference>
<reference key="3">
    <citation type="journal article" date="2004" name="Mol. Cell. Proteomics">
        <title>A comparative analysis of an orthologous proteomic environment in the yeasts Saccharomyces cerevisiae and Schizosaccharomyces pombe.</title>
        <authorList>
            <person name="Roguev A."/>
            <person name="Shevchenko A."/>
            <person name="Schaft D."/>
            <person name="Thomas H."/>
            <person name="Stewart A.F."/>
            <person name="Shevchenko A."/>
        </authorList>
    </citation>
    <scope>COMPOSITION OF THE SET1 AND LID2 COMPLEXES</scope>
</reference>
<reference key="4">
    <citation type="journal article" date="2014" name="Yi Chuan">
        <title>[Ash2, a subunit of histone H3K4 methyltransferase complex, is involved in the sporulation in Schizosaccharomyces pombe].</title>
        <authorList>
            <person name="Wang W."/>
            <person name="Zhou H."/>
            <person name="Yu Y."/>
            <person name="Lv H."/>
        </authorList>
    </citation>
    <scope>FUNCTION</scope>
    <scope>DISRUPTION PHENOTYPE</scope>
</reference>
<organism>
    <name type="scientific">Schizosaccharomyces pombe (strain 972 / ATCC 24843)</name>
    <name type="common">Fission yeast</name>
    <dbReference type="NCBI Taxonomy" id="284812"/>
    <lineage>
        <taxon>Eukaryota</taxon>
        <taxon>Fungi</taxon>
        <taxon>Dikarya</taxon>
        <taxon>Ascomycota</taxon>
        <taxon>Taphrinomycotina</taxon>
        <taxon>Schizosaccharomycetes</taxon>
        <taxon>Schizosaccharomycetales</taxon>
        <taxon>Schizosaccharomycetaceae</taxon>
        <taxon>Schizosaccharomyces</taxon>
    </lineage>
</organism>
<accession>O60070</accession>
<evidence type="ECO:0000255" key="1">
    <source>
        <dbReference type="PROSITE-ProRule" id="PRU00146"/>
    </source>
</evidence>
<evidence type="ECO:0000255" key="2">
    <source>
        <dbReference type="PROSITE-ProRule" id="PRU00548"/>
    </source>
</evidence>
<evidence type="ECO:0000256" key="3">
    <source>
        <dbReference type="SAM" id="MobiDB-lite"/>
    </source>
</evidence>
<evidence type="ECO:0000269" key="4">
    <source>
    </source>
</evidence>
<evidence type="ECO:0000269" key="5">
    <source>
    </source>
</evidence>
<evidence type="ECO:0000269" key="6">
    <source>
    </source>
</evidence>
<evidence type="ECO:0000303" key="7">
    <source>
    </source>
</evidence>
<evidence type="ECO:0000305" key="8"/>
<evidence type="ECO:0000305" key="9">
    <source>
    </source>
</evidence>
<keyword id="KW-0479">Metal-binding</keyword>
<keyword id="KW-0539">Nucleus</keyword>
<keyword id="KW-1185">Reference proteome</keyword>
<keyword id="KW-0862">Zinc</keyword>
<keyword id="KW-0863">Zinc-finger</keyword>
<protein>
    <recommendedName>
        <fullName evidence="7">Set1 complex component ash2</fullName>
        <shortName evidence="7">Set1C component ash2</shortName>
    </recommendedName>
    <alternativeName>
        <fullName evidence="7">COMPASS component ash2</fullName>
    </alternativeName>
    <alternativeName>
        <fullName evidence="7">Complex proteins associated with set1 protein ash2</fullName>
    </alternativeName>
    <alternativeName>
        <fullName evidence="7">Lid2 complex component ash2</fullName>
        <shortName evidence="7">Lid2C component ash2</shortName>
    </alternativeName>
</protein>
<name>ASH2_SCHPO</name>
<dbReference type="EMBL" id="CU329671">
    <property type="protein sequence ID" value="CAA18661.1"/>
    <property type="molecule type" value="Genomic_DNA"/>
</dbReference>
<dbReference type="PIR" id="T39409">
    <property type="entry name" value="T39409"/>
</dbReference>
<dbReference type="RefSeq" id="NP_596557.1">
    <property type="nucleotide sequence ID" value="NM_001022478.2"/>
</dbReference>
<dbReference type="SMR" id="O60070"/>
<dbReference type="BioGRID" id="276222">
    <property type="interactions" value="246"/>
</dbReference>
<dbReference type="ComplexPortal" id="CPX-10325">
    <property type="entry name" value="COMPASS complex"/>
</dbReference>
<dbReference type="FunCoup" id="O60070">
    <property type="interactions" value="496"/>
</dbReference>
<dbReference type="STRING" id="284812.O60070"/>
<dbReference type="iPTMnet" id="O60070"/>
<dbReference type="PaxDb" id="4896-SPBC13G1.08c.1"/>
<dbReference type="EnsemblFungi" id="SPBC13G1.08c.1">
    <property type="protein sequence ID" value="SPBC13G1.08c.1:pep"/>
    <property type="gene ID" value="SPBC13G1.08c"/>
</dbReference>
<dbReference type="GeneID" id="2539667"/>
<dbReference type="KEGG" id="spo:2539667"/>
<dbReference type="PomBase" id="SPBC13G1.08c">
    <property type="gene designation" value="ash2"/>
</dbReference>
<dbReference type="VEuPathDB" id="FungiDB:SPBC13G1.08c"/>
<dbReference type="eggNOG" id="KOG2626">
    <property type="taxonomic scope" value="Eukaryota"/>
</dbReference>
<dbReference type="HOGENOM" id="CLU_380890_0_0_1"/>
<dbReference type="InParanoid" id="O60070"/>
<dbReference type="OMA" id="CATCSRW"/>
<dbReference type="PhylomeDB" id="O60070"/>
<dbReference type="Reactome" id="R-SPO-3214841">
    <property type="pathway name" value="PKMTs methylate histone lysines"/>
</dbReference>
<dbReference type="Reactome" id="R-SPO-9772755">
    <property type="pathway name" value="Formation of WDR5-containing histone-modifying complexes"/>
</dbReference>
<dbReference type="PRO" id="PR:O60070"/>
<dbReference type="Proteomes" id="UP000002485">
    <property type="component" value="Chromosome II"/>
</dbReference>
<dbReference type="GO" id="GO:0000785">
    <property type="term" value="C:chromatin"/>
    <property type="evidence" value="ECO:0000305"/>
    <property type="project" value="PomBase"/>
</dbReference>
<dbReference type="GO" id="GO:0048189">
    <property type="term" value="C:Lid2 complex"/>
    <property type="evidence" value="ECO:0000314"/>
    <property type="project" value="PomBase"/>
</dbReference>
<dbReference type="GO" id="GO:0005634">
    <property type="term" value="C:nucleus"/>
    <property type="evidence" value="ECO:0000314"/>
    <property type="project" value="PomBase"/>
</dbReference>
<dbReference type="GO" id="GO:0048188">
    <property type="term" value="C:Set1C/COMPASS complex"/>
    <property type="evidence" value="ECO:0000314"/>
    <property type="project" value="PomBase"/>
</dbReference>
<dbReference type="GO" id="GO:0000976">
    <property type="term" value="F:transcription cis-regulatory region binding"/>
    <property type="evidence" value="ECO:0000318"/>
    <property type="project" value="GO_Central"/>
</dbReference>
<dbReference type="GO" id="GO:0008270">
    <property type="term" value="F:zinc ion binding"/>
    <property type="evidence" value="ECO:0007669"/>
    <property type="project" value="UniProtKB-KW"/>
</dbReference>
<dbReference type="GO" id="GO:0045814">
    <property type="term" value="P:negative regulation of gene expression, epigenetic"/>
    <property type="evidence" value="ECO:0000315"/>
    <property type="project" value="PomBase"/>
</dbReference>
<dbReference type="GO" id="GO:0045815">
    <property type="term" value="P:transcription initiation-coupled chromatin remodeling"/>
    <property type="evidence" value="ECO:0000305"/>
    <property type="project" value="PomBase"/>
</dbReference>
<dbReference type="CDD" id="cd15583">
    <property type="entry name" value="PHD_ash2p_like"/>
    <property type="match status" value="1"/>
</dbReference>
<dbReference type="CDD" id="cd12872">
    <property type="entry name" value="SPRY_Ash2"/>
    <property type="match status" value="1"/>
</dbReference>
<dbReference type="Gene3D" id="2.60.120.920">
    <property type="match status" value="1"/>
</dbReference>
<dbReference type="Gene3D" id="3.90.980.20">
    <property type="match status" value="1"/>
</dbReference>
<dbReference type="InterPro" id="IPR037353">
    <property type="entry name" value="ASH2"/>
</dbReference>
<dbReference type="InterPro" id="IPR049455">
    <property type="entry name" value="ASH2-like_PHD"/>
</dbReference>
<dbReference type="InterPro" id="IPR053835">
    <property type="entry name" value="ASH2L-like_WH"/>
</dbReference>
<dbReference type="InterPro" id="IPR001870">
    <property type="entry name" value="B30.2/SPRY"/>
</dbReference>
<dbReference type="InterPro" id="IPR043136">
    <property type="entry name" value="B30.2/SPRY_sf"/>
</dbReference>
<dbReference type="InterPro" id="IPR013320">
    <property type="entry name" value="ConA-like_dom_sf"/>
</dbReference>
<dbReference type="InterPro" id="IPR003877">
    <property type="entry name" value="SPRY_dom"/>
</dbReference>
<dbReference type="InterPro" id="IPR019786">
    <property type="entry name" value="Zinc_finger_PHD-type_CS"/>
</dbReference>
<dbReference type="InterPro" id="IPR011011">
    <property type="entry name" value="Znf_FYVE_PHD"/>
</dbReference>
<dbReference type="PANTHER" id="PTHR10598">
    <property type="entry name" value="SET1/ASH2 HISTONE METHYLTRANSFERASE COMPLEX SUBUNIT ASH2"/>
    <property type="match status" value="1"/>
</dbReference>
<dbReference type="PANTHER" id="PTHR10598:SF0">
    <property type="entry name" value="SET1_ASH2 HISTONE METHYLTRANSFERASE COMPLEX SUBUNIT ASH2"/>
    <property type="match status" value="1"/>
</dbReference>
<dbReference type="Pfam" id="PF21198">
    <property type="entry name" value="ASH2L-like_WH"/>
    <property type="match status" value="1"/>
</dbReference>
<dbReference type="Pfam" id="PF21257">
    <property type="entry name" value="PHD_ash2p_like"/>
    <property type="match status" value="1"/>
</dbReference>
<dbReference type="Pfam" id="PF00622">
    <property type="entry name" value="SPRY"/>
    <property type="match status" value="1"/>
</dbReference>
<dbReference type="SMART" id="SM00449">
    <property type="entry name" value="SPRY"/>
    <property type="match status" value="1"/>
</dbReference>
<dbReference type="SUPFAM" id="SSF49899">
    <property type="entry name" value="Concanavalin A-like lectins/glucanases"/>
    <property type="match status" value="1"/>
</dbReference>
<dbReference type="SUPFAM" id="SSF57903">
    <property type="entry name" value="FYVE/PHD zinc finger"/>
    <property type="match status" value="1"/>
</dbReference>
<dbReference type="PROSITE" id="PS50188">
    <property type="entry name" value="B302_SPRY"/>
    <property type="match status" value="1"/>
</dbReference>
<dbReference type="PROSITE" id="PS01359">
    <property type="entry name" value="ZF_PHD_1"/>
    <property type="match status" value="1"/>
</dbReference>
<proteinExistence type="inferred from homology"/>
<comment type="function">
    <text evidence="4 6">Component of the COMPASS (Set1C) complex that specifically mono-, di- and trimethylates histone H3 to form H3K4me1/2/3, which subsequently plays a role in telomere length maintenance and transcription elongation regulation (PubMed:12488447, PubMed:25252312). Regulates MAPK pathway and sporulation through H3K4 methylation (PubMed:25252312).</text>
</comment>
<comment type="subunit">
    <text evidence="4 5">Component of the Set1 complex composed of ash2, sdc1, set1, shg1, spp1, swd1, swd2 and swd3. Component of the Lid2 complex composed of ash2, jmj3, lid2, sdc1 and snt2.</text>
</comment>
<comment type="subcellular location">
    <subcellularLocation>
        <location evidence="9">Nucleus</location>
    </subcellularLocation>
</comment>
<comment type="disruption phenotype">
    <text evidence="6">Results in a delay of sporulation and a substantial drop of sporulation efficiency (PubMed:25252312). Causes a reduction of H3K4me2 level in the coding region of spk1, as well as a reduction of the expression of stk1, mei2, mam2 and map3 genes (PubMed:25252312).</text>
</comment>
<comment type="similarity">
    <text evidence="8">Belongs to the cclA family.</text>
</comment>
<feature type="chain" id="PRO_0000059320" description="Set1 complex component ash2">
    <location>
        <begin position="1"/>
        <end position="652"/>
    </location>
</feature>
<feature type="domain" description="B30.2/SPRY" evidence="2">
    <location>
        <begin position="330"/>
        <end position="519"/>
    </location>
</feature>
<feature type="zinc finger region" description="PHD-type" evidence="1">
    <location>
        <begin position="40"/>
        <end position="94"/>
    </location>
</feature>
<feature type="region of interest" description="Disordered" evidence="3">
    <location>
        <begin position="1"/>
        <end position="32"/>
    </location>
</feature>
<feature type="region of interest" description="Disordered" evidence="3">
    <location>
        <begin position="234"/>
        <end position="270"/>
    </location>
</feature>
<feature type="compositionally biased region" description="Polar residues" evidence="3">
    <location>
        <begin position="15"/>
        <end position="32"/>
    </location>
</feature>
<feature type="compositionally biased region" description="Basic and acidic residues" evidence="3">
    <location>
        <begin position="247"/>
        <end position="261"/>
    </location>
</feature>
<feature type="binding site" evidence="1">
    <location>
        <position position="43"/>
    </location>
    <ligand>
        <name>Zn(2+)</name>
        <dbReference type="ChEBI" id="CHEBI:29105"/>
        <label>1</label>
    </ligand>
</feature>
<feature type="binding site" evidence="1">
    <location>
        <position position="45"/>
    </location>
    <ligand>
        <name>Zn(2+)</name>
        <dbReference type="ChEBI" id="CHEBI:29105"/>
        <label>1</label>
    </ligand>
</feature>
<feature type="binding site" evidence="1">
    <location>
        <position position="58"/>
    </location>
    <ligand>
        <name>Zn(2+)</name>
        <dbReference type="ChEBI" id="CHEBI:29105"/>
        <label>2</label>
    </ligand>
</feature>
<feature type="binding site" evidence="1">
    <location>
        <position position="61"/>
    </location>
    <ligand>
        <name>Zn(2+)</name>
        <dbReference type="ChEBI" id="CHEBI:29105"/>
        <label>2</label>
    </ligand>
</feature>
<feature type="binding site" evidence="1">
    <location>
        <position position="66"/>
    </location>
    <ligand>
        <name>Zn(2+)</name>
        <dbReference type="ChEBI" id="CHEBI:29105"/>
        <label>1</label>
    </ligand>
</feature>
<feature type="binding site" evidence="1">
    <location>
        <position position="69"/>
    </location>
    <ligand>
        <name>Zn(2+)</name>
        <dbReference type="ChEBI" id="CHEBI:29105"/>
        <label>1</label>
    </ligand>
</feature>
<feature type="binding site" evidence="1">
    <location>
        <position position="88"/>
    </location>
    <ligand>
        <name>Zn(2+)</name>
        <dbReference type="ChEBI" id="CHEBI:29105"/>
        <label>2</label>
    </ligand>
</feature>
<feature type="binding site" evidence="1">
    <location>
        <position position="91"/>
    </location>
    <ligand>
        <name>Zn(2+)</name>
        <dbReference type="ChEBI" id="CHEBI:29105"/>
        <label>2</label>
    </ligand>
</feature>
<gene>
    <name evidence="7" type="primary">ash2</name>
    <name type="ORF">SPBC13G1.08c</name>
</gene>